<proteinExistence type="evidence at protein level"/>
<accession>O95248</accession>
<accession>A0A024R4Z9</accession>
<accession>A6PVG9</accession>
<accession>G5E933</accession>
<accession>O60228</accession>
<accession>Q5JXD8</accession>
<accession>Q5PPM2</accession>
<accession>Q96GR9</accession>
<accession>Q9UGB8</accession>
<gene>
    <name type="primary">SBF1</name>
    <name type="synonym">MTMR5</name>
</gene>
<organism>
    <name type="scientific">Homo sapiens</name>
    <name type="common">Human</name>
    <dbReference type="NCBI Taxonomy" id="9606"/>
    <lineage>
        <taxon>Eukaryota</taxon>
        <taxon>Metazoa</taxon>
        <taxon>Chordata</taxon>
        <taxon>Craniata</taxon>
        <taxon>Vertebrata</taxon>
        <taxon>Euteleostomi</taxon>
        <taxon>Mammalia</taxon>
        <taxon>Eutheria</taxon>
        <taxon>Euarchontoglires</taxon>
        <taxon>Primates</taxon>
        <taxon>Haplorrhini</taxon>
        <taxon>Catarrhini</taxon>
        <taxon>Hominidae</taxon>
        <taxon>Homo</taxon>
    </lineage>
</organism>
<evidence type="ECO:0000250" key="1">
    <source>
        <dbReference type="UniProtKB" id="Q6ZPE2"/>
    </source>
</evidence>
<evidence type="ECO:0000255" key="2"/>
<evidence type="ECO:0000255" key="3">
    <source>
        <dbReference type="PROSITE-ProRule" id="PRU00145"/>
    </source>
</evidence>
<evidence type="ECO:0000255" key="4">
    <source>
        <dbReference type="PROSITE-ProRule" id="PRU00304"/>
    </source>
</evidence>
<evidence type="ECO:0000255" key="5">
    <source>
        <dbReference type="PROSITE-ProRule" id="PRU00669"/>
    </source>
</evidence>
<evidence type="ECO:0000256" key="6">
    <source>
        <dbReference type="SAM" id="MobiDB-lite"/>
    </source>
</evidence>
<evidence type="ECO:0000269" key="7">
    <source>
    </source>
</evidence>
<evidence type="ECO:0000269" key="8">
    <source>
    </source>
</evidence>
<evidence type="ECO:0000269" key="9">
    <source>
    </source>
</evidence>
<evidence type="ECO:0000269" key="10">
    <source>
    </source>
</evidence>
<evidence type="ECO:0000269" key="11">
    <source>
    </source>
</evidence>
<evidence type="ECO:0000269" key="12">
    <source>
    </source>
</evidence>
<evidence type="ECO:0000269" key="13">
    <source>
    </source>
</evidence>
<evidence type="ECO:0000303" key="14">
    <source>
    </source>
</evidence>
<evidence type="ECO:0000303" key="15">
    <source ref="2"/>
</evidence>
<evidence type="ECO:0000305" key="16"/>
<evidence type="ECO:0007744" key="17">
    <source>
    </source>
</evidence>
<evidence type="ECO:0007744" key="18">
    <source>
    </source>
</evidence>
<evidence type="ECO:0007744" key="19">
    <source>
    </source>
</evidence>
<evidence type="ECO:0007744" key="20">
    <source>
    </source>
</evidence>
<protein>
    <recommendedName>
        <fullName>Myotubularin-related protein 5</fullName>
    </recommendedName>
    <alternativeName>
        <fullName evidence="16">Inactive phosphatidylinositol 3-phosphatase 5</fullName>
    </alternativeName>
    <alternativeName>
        <fullName>SET-binding factor 1</fullName>
        <shortName>Sbf1</shortName>
    </alternativeName>
</protein>
<keyword id="KW-0025">Alternative splicing</keyword>
<keyword id="KW-0966">Cell projection</keyword>
<keyword id="KW-0144">Charcot-Marie-Tooth disease</keyword>
<keyword id="KW-0963">Cytoplasm</keyword>
<keyword id="KW-0225">Disease variant</keyword>
<keyword id="KW-0344">Guanine-nucleotide releasing factor</keyword>
<keyword id="KW-0488">Methylation</keyword>
<keyword id="KW-0523">Neurodegeneration</keyword>
<keyword id="KW-0622">Neuropathy</keyword>
<keyword id="KW-0597">Phosphoprotein</keyword>
<keyword id="KW-1267">Proteomics identification</keyword>
<keyword id="KW-1185">Reference proteome</keyword>
<feature type="chain" id="PRO_0000094938" description="Myotubularin-related protein 5">
    <location>
        <begin position="1"/>
        <end position="1868"/>
    </location>
</feature>
<feature type="domain" description="uDENN" evidence="4">
    <location>
        <begin position="7"/>
        <end position="185"/>
    </location>
</feature>
<feature type="domain" description="cDENN" evidence="4">
    <location>
        <begin position="204"/>
        <end position="337"/>
    </location>
</feature>
<feature type="domain" description="dDENN" evidence="4">
    <location>
        <begin position="339"/>
        <end position="440"/>
    </location>
</feature>
<feature type="domain" description="GRAM" evidence="2">
    <location>
        <begin position="881"/>
        <end position="969"/>
    </location>
</feature>
<feature type="domain" description="Myotubularin phosphatase" evidence="5">
    <location>
        <begin position="1121"/>
        <end position="1597"/>
    </location>
</feature>
<feature type="domain" description="PH" evidence="3">
    <location>
        <begin position="1762"/>
        <end position="1866"/>
    </location>
</feature>
<feature type="region of interest" description="Disordered" evidence="6">
    <location>
        <begin position="91"/>
        <end position="123"/>
    </location>
</feature>
<feature type="region of interest" description="Disordered" evidence="6">
    <location>
        <begin position="1067"/>
        <end position="1116"/>
    </location>
</feature>
<feature type="region of interest" description="Disordered" evidence="6">
    <location>
        <begin position="1268"/>
        <end position="1318"/>
    </location>
</feature>
<feature type="region of interest" description="Disordered" evidence="6">
    <location>
        <begin position="1606"/>
        <end position="1631"/>
    </location>
</feature>
<feature type="region of interest" description="Disordered" evidence="6">
    <location>
        <begin position="1723"/>
        <end position="1757"/>
    </location>
</feature>
<feature type="compositionally biased region" description="Acidic residues" evidence="6">
    <location>
        <begin position="1088"/>
        <end position="1101"/>
    </location>
</feature>
<feature type="compositionally biased region" description="Polar residues" evidence="6">
    <location>
        <begin position="1103"/>
        <end position="1116"/>
    </location>
</feature>
<feature type="compositionally biased region" description="Polar residues" evidence="6">
    <location>
        <begin position="1282"/>
        <end position="1291"/>
    </location>
</feature>
<feature type="compositionally biased region" description="Low complexity" evidence="6">
    <location>
        <begin position="1723"/>
        <end position="1740"/>
    </location>
</feature>
<feature type="compositionally biased region" description="Polar residues" evidence="6">
    <location>
        <begin position="1745"/>
        <end position="1757"/>
    </location>
</feature>
<feature type="modified residue" description="Phosphoserine" evidence="18">
    <location>
        <position position="1121"/>
    </location>
</feature>
<feature type="modified residue" description="Phosphothreonine" evidence="17 18 20">
    <location>
        <position position="1138"/>
    </location>
</feature>
<feature type="modified residue" description="N6-methyllysine" evidence="19">
    <location>
        <position position="1223"/>
    </location>
</feature>
<feature type="modified residue" description="Phosphoserine" evidence="18">
    <location>
        <position position="1747"/>
    </location>
</feature>
<feature type="splice variant" id="VSP_059427" description="In isoform 5." evidence="14 15">
    <location>
        <position position="93"/>
    </location>
</feature>
<feature type="splice variant" id="VSP_015158" description="In isoform 4 and isoform 5." evidence="14 15">
    <original>H</original>
    <variation>HVPSPRARVTTLSNPMAASASRRTAPR</variation>
    <location>
        <position position="1276"/>
    </location>
</feature>
<feature type="sequence variant" id="VAR_070046" description="In CMT4B3; dbSNP:rs587776986." evidence="10">
    <original>M</original>
    <variation>V</variation>
    <location>
        <position position="418"/>
    </location>
</feature>
<feature type="sequence variant" id="VAR_070047" description="In CMT4B3; dbSNP:rs200488568." evidence="10">
    <original>T</original>
    <variation>A</variation>
    <location>
        <position position="1565"/>
    </location>
</feature>
<feature type="sequence conflict" description="In Ref. 4; AAC39675." evidence="16" ref="4">
    <original>A</original>
    <variation>V</variation>
    <location>
        <position position="597"/>
    </location>
</feature>
<feature type="sequence conflict" description="In Ref. 4; AAC39675." evidence="16" ref="4">
    <original>P</original>
    <variation>R</variation>
    <location>
        <position position="1173"/>
    </location>
</feature>
<feature type="sequence conflict" description="In Ref. 5; AAC78842." evidence="16" ref="5">
    <original>A</original>
    <variation>P</variation>
    <location>
        <position position="1377"/>
    </location>
</feature>
<feature type="sequence conflict" description="In Ref. 5; AAC78842." evidence="16" ref="5">
    <original>Y</original>
    <variation>H</variation>
    <location>
        <position position="1557"/>
    </location>
</feature>
<comment type="function">
    <text evidence="1 8 9 12 13">Acts as an adapter for the phosphatase MTMR2 to regulate MTMR2 catalytic activity and subcellular location (PubMed:12668758). Promotes the exchange of GDP to GTP, converting inactive GDP-bound Rab proteins into their active GTP-bound form (PubMed:20937701). May function as a guanine nucleotide exchange factor (GEF) activating RAB28 (PubMed:20937701). Acts as a suppressor of autophagy in neurons (PubMed:35580604). Together with its binding partner, the phosphatase MTMR2, plays a role in dephosphorylation of phosphoinositides critical for autophagy initiation and autophagosome maturation (PubMed:35580604). Plays a role in positively regulating late-stage radial sorting of large caliber axons, a process leading to myelination by Schwann cells, possibly via regulating endosomal trafficking (By similarity). Inhibits myoblast differentiation in vitro and induces oncogenic transformation in fibroblasts (PubMed:9537414).</text>
</comment>
<comment type="subunit">
    <text evidence="7 8 11 13">Heterodimer with lipid phosphatase MTMR2 (PubMed:12668758, PubMed:34718573). Interacts with SBF2/MTMR13; the interaction seems to be independent of the coiled-coil and PH domain of SBF2/MTMR13 and independent of MTMR2 (PubMed:34718573). Interacts with KMT2A/MLL1 (via SET domain) (PubMed:9537414). Interacts with SUV39H1 (PubMed:10848615).</text>
</comment>
<comment type="subcellular location">
    <subcellularLocation>
        <location evidence="8 9 12">Cytoplasm</location>
    </subcellularLocation>
    <subcellularLocation>
        <location evidence="8">Cytoplasm</location>
        <location evidence="8">Perinuclear region</location>
    </subcellularLocation>
    <subcellularLocation>
        <location evidence="12">Cell projection</location>
        <location evidence="12">Neuron projection</location>
    </subcellularLocation>
    <text evidence="12">Localized in neuronal somata and processes with punctate/vesicular morphology.</text>
</comment>
<comment type="alternative products">
    <event type="alternative splicing"/>
    <isoform>
        <id>O95248-1</id>
        <name>1</name>
        <sequence type="displayed"/>
    </isoform>
    <isoform>
        <id>O95248-4</id>
        <name>4</name>
        <sequence type="described" ref="VSP_015158"/>
    </isoform>
    <isoform>
        <id>O95248-5</id>
        <name>5</name>
        <sequence type="described" ref="VSP_059427 VSP_015158"/>
    </isoform>
</comment>
<comment type="tissue specificity">
    <text evidence="12">Expressed in neurons within the frontal cortex, in neurons of the deep cerebellar nuclei, stellate and basket cells of the molecular layer, and Golgi cells of the granular layer (at protein level).</text>
</comment>
<comment type="domain">
    <text evidence="8">The C-terminal domain mediates interaction with MTMR2.</text>
</comment>
<comment type="disease" evidence="10">
    <disease id="DI-03784">
        <name>Charcot-Marie-Tooth disease, demyelinating, type 4B3</name>
        <acronym>CMT4B3</acronym>
        <description>A recessive demyelinating form of Charcot-Marie-Tooth disease, a disorder of the peripheral nervous system, characterized by progressive weakness and atrophy, initially of the peroneal muscles and later of the distal muscles of the arms. Charcot-Marie-Tooth disease is classified in two main groups on the basis of electrophysiologic properties and histopathology: primary peripheral demyelinating neuropathies (designated CMT1 when they are dominantly inherited) and primary peripheral axonal neuropathies (CMT2). Demyelinating neuropathies are characterized by severely reduced nerve conduction velocities (less than 38 m/sec), segmental demyelination and remyelination with onion bulb formations on nerve biopsy, slowly progressive distal muscle atrophy and weakness, absent deep tendon reflexes, and hollow feet. By convention autosomal recessive forms of demyelinating Charcot-Marie-Tooth disease are designated CMT4.</description>
        <dbReference type="MIM" id="615284"/>
    </disease>
    <text>The disease is caused by variants affecting the gene represented in this entry.</text>
</comment>
<comment type="similarity">
    <text evidence="16">Belongs to the protein-tyrosine phosphatase family. Non-receptor class myotubularin subfamily.</text>
</comment>
<comment type="caution">
    <text evidence="13 16">Although it belongs to the non-receptor class myotubularin subfamily, lacks the conserved active site cysteine residue at position 1422 in the dsPTPase catalytic loop and does not have phosphatase activity (PubMed:9537414). The pocket is however sufficiently preserved to bind phosphorylated substrates, and maybe protect them from phosphatases.</text>
</comment>
<comment type="sequence caution" evidence="16">
    <conflict type="frameshift">
        <sequence resource="EMBL-CDS" id="AAC39675"/>
    </conflict>
</comment>
<dbReference type="EMBL" id="AL096767">
    <property type="status" value="NOT_ANNOTATED_CDS"/>
    <property type="molecule type" value="Genomic_DNA"/>
</dbReference>
<dbReference type="EMBL" id="CH471138">
    <property type="protein sequence ID" value="EAW73536.1"/>
    <property type="molecule type" value="Genomic_DNA"/>
</dbReference>
<dbReference type="EMBL" id="CH471138">
    <property type="protein sequence ID" value="EAW73538.1"/>
    <property type="molecule type" value="Genomic_DNA"/>
</dbReference>
<dbReference type="EMBL" id="CH471138">
    <property type="protein sequence ID" value="EAW73539.1"/>
    <property type="molecule type" value="Genomic_DNA"/>
</dbReference>
<dbReference type="EMBL" id="BC009268">
    <property type="protein sequence ID" value="AAH09268.2"/>
    <property type="molecule type" value="mRNA"/>
</dbReference>
<dbReference type="EMBL" id="BC087612">
    <property type="protein sequence ID" value="AAH87612.1"/>
    <property type="molecule type" value="mRNA"/>
</dbReference>
<dbReference type="EMBL" id="U93181">
    <property type="protein sequence ID" value="AAC39675.1"/>
    <property type="status" value="ALT_FRAME"/>
    <property type="molecule type" value="mRNA"/>
</dbReference>
<dbReference type="EMBL" id="AF072929">
    <property type="protein sequence ID" value="AAC78842.1"/>
    <property type="molecule type" value="mRNA"/>
</dbReference>
<dbReference type="CCDS" id="CCDS14091.2">
    <molecule id="O95248-5"/>
</dbReference>
<dbReference type="CCDS" id="CCDS93186.1">
    <molecule id="O95248-1"/>
</dbReference>
<dbReference type="CCDS" id="CCDS93187.1">
    <molecule id="O95248-4"/>
</dbReference>
<dbReference type="RefSeq" id="NP_001352748.1">
    <molecule id="O95248-1"/>
    <property type="nucleotide sequence ID" value="NM_001365819.1"/>
</dbReference>
<dbReference type="RefSeq" id="NP_001397723.1">
    <molecule id="O95248-4"/>
    <property type="nucleotide sequence ID" value="NM_001410794.1"/>
</dbReference>
<dbReference type="RefSeq" id="NP_002963.2">
    <molecule id="O95248-5"/>
    <property type="nucleotide sequence ID" value="NM_002972.4"/>
</dbReference>
<dbReference type="SMR" id="O95248"/>
<dbReference type="BioGRID" id="112212">
    <property type="interactions" value="191"/>
</dbReference>
<dbReference type="FunCoup" id="O95248">
    <property type="interactions" value="2697"/>
</dbReference>
<dbReference type="IntAct" id="O95248">
    <property type="interactions" value="85"/>
</dbReference>
<dbReference type="MINT" id="O95248"/>
<dbReference type="STRING" id="9606.ENSP00000370196"/>
<dbReference type="DEPOD" id="SBF1"/>
<dbReference type="iPTMnet" id="O95248"/>
<dbReference type="PhosphoSitePlus" id="O95248"/>
<dbReference type="SwissPalm" id="O95248"/>
<dbReference type="BioMuta" id="SBF1"/>
<dbReference type="jPOST" id="O95248"/>
<dbReference type="MassIVE" id="O95248"/>
<dbReference type="PaxDb" id="9606-ENSP00000370196"/>
<dbReference type="PeptideAtlas" id="O95248"/>
<dbReference type="ProteomicsDB" id="33814"/>
<dbReference type="ProteomicsDB" id="50743">
    <molecule id="O95248-1"/>
</dbReference>
<dbReference type="ProteomicsDB" id="50744">
    <molecule id="O95248-4"/>
</dbReference>
<dbReference type="Pumba" id="O95248"/>
<dbReference type="Antibodypedia" id="28572">
    <property type="antibodies" value="80 antibodies from 15 providers"/>
</dbReference>
<dbReference type="DNASU" id="6305"/>
<dbReference type="Ensembl" id="ENST00000380817.8">
    <molecule id="O95248-5"/>
    <property type="protein sequence ID" value="ENSP00000370196.2"/>
    <property type="gene ID" value="ENSG00000100241.22"/>
</dbReference>
<dbReference type="Ensembl" id="ENST00000684986.1">
    <molecule id="O95248-4"/>
    <property type="protein sequence ID" value="ENSP00000509117.1"/>
    <property type="gene ID" value="ENSG00000100241.22"/>
</dbReference>
<dbReference type="Ensembl" id="ENST00000689129.1">
    <molecule id="O95248-1"/>
    <property type="protein sequence ID" value="ENSP00000510414.1"/>
    <property type="gene ID" value="ENSG00000100241.22"/>
</dbReference>
<dbReference type="GeneID" id="6305"/>
<dbReference type="KEGG" id="hsa:6305"/>
<dbReference type="MANE-Select" id="ENST00000380817.8">
    <molecule id="O95248-5"/>
    <property type="protein sequence ID" value="ENSP00000370196.2"/>
    <property type="RefSeq nucleotide sequence ID" value="NM_002972.4"/>
    <property type="RefSeq protein sequence ID" value="NP_002963.2"/>
</dbReference>
<dbReference type="UCSC" id="uc003blh.5">
    <molecule id="O95248-1"/>
    <property type="organism name" value="human"/>
</dbReference>
<dbReference type="UCSC" id="uc062flz.1">
    <property type="organism name" value="human"/>
</dbReference>
<dbReference type="AGR" id="HGNC:10542"/>
<dbReference type="CTD" id="6305"/>
<dbReference type="DisGeNET" id="6305"/>
<dbReference type="GeneCards" id="SBF1"/>
<dbReference type="GeneReviews" id="SBF1"/>
<dbReference type="HGNC" id="HGNC:10542">
    <property type="gene designation" value="SBF1"/>
</dbReference>
<dbReference type="HPA" id="ENSG00000100241">
    <property type="expression patterns" value="Low tissue specificity"/>
</dbReference>
<dbReference type="MalaCards" id="SBF1"/>
<dbReference type="MIM" id="603560">
    <property type="type" value="gene"/>
</dbReference>
<dbReference type="MIM" id="615284">
    <property type="type" value="phenotype"/>
</dbReference>
<dbReference type="neXtProt" id="NX_O95248"/>
<dbReference type="OpenTargets" id="ENSG00000100241"/>
<dbReference type="Orphanet" id="363981">
    <property type="disease" value="Charcot-Marie-Tooth disease type 4B3"/>
</dbReference>
<dbReference type="PharmGKB" id="PA34953"/>
<dbReference type="VEuPathDB" id="HostDB:ENSG00000100241"/>
<dbReference type="eggNOG" id="KOG1090">
    <property type="taxonomic scope" value="Eukaryota"/>
</dbReference>
<dbReference type="eggNOG" id="KOG2080">
    <property type="taxonomic scope" value="Eukaryota"/>
</dbReference>
<dbReference type="GeneTree" id="ENSGT00940000155263"/>
<dbReference type="InParanoid" id="O95248"/>
<dbReference type="OMA" id="NCINCIF"/>
<dbReference type="OrthoDB" id="74314at2759"/>
<dbReference type="PAN-GO" id="O95248">
    <property type="GO annotations" value="2 GO annotations based on evolutionary models"/>
</dbReference>
<dbReference type="PhylomeDB" id="O95248"/>
<dbReference type="TreeFam" id="TF318583"/>
<dbReference type="BRENDA" id="3.1.3.16">
    <property type="organism ID" value="2681"/>
</dbReference>
<dbReference type="PathwayCommons" id="O95248"/>
<dbReference type="Reactome" id="R-HSA-1483248">
    <property type="pathway name" value="Synthesis of PIPs at the ER membrane"/>
</dbReference>
<dbReference type="Reactome" id="R-HSA-8876198">
    <property type="pathway name" value="RAB GEFs exchange GTP for GDP on RABs"/>
</dbReference>
<dbReference type="SignaLink" id="O95248"/>
<dbReference type="SIGNOR" id="O95248"/>
<dbReference type="BioGRID-ORCS" id="6305">
    <property type="hits" value="14 hits in 1174 CRISPR screens"/>
</dbReference>
<dbReference type="CD-CODE" id="FB4E32DD">
    <property type="entry name" value="Presynaptic clusters and postsynaptic densities"/>
</dbReference>
<dbReference type="ChiTaRS" id="SBF1">
    <property type="organism name" value="human"/>
</dbReference>
<dbReference type="GeneWiki" id="SBF1"/>
<dbReference type="GenomeRNAi" id="6305"/>
<dbReference type="Pharos" id="O95248">
    <property type="development level" value="Tbio"/>
</dbReference>
<dbReference type="PRO" id="PR:O95248"/>
<dbReference type="Proteomes" id="UP000005640">
    <property type="component" value="Chromosome 22"/>
</dbReference>
<dbReference type="RNAct" id="O95248">
    <property type="molecule type" value="protein"/>
</dbReference>
<dbReference type="Bgee" id="ENSG00000100241">
    <property type="expression patterns" value="Expressed in left testis and 193 other cell types or tissues"/>
</dbReference>
<dbReference type="ExpressionAtlas" id="O95248">
    <property type="expression patterns" value="baseline and differential"/>
</dbReference>
<dbReference type="GO" id="GO:0005737">
    <property type="term" value="C:cytoplasm"/>
    <property type="evidence" value="ECO:0000314"/>
    <property type="project" value="UniProtKB"/>
</dbReference>
<dbReference type="GO" id="GO:0005829">
    <property type="term" value="C:cytosol"/>
    <property type="evidence" value="ECO:0000304"/>
    <property type="project" value="Reactome"/>
</dbReference>
<dbReference type="GO" id="GO:0005789">
    <property type="term" value="C:endoplasmic reticulum membrane"/>
    <property type="evidence" value="ECO:0000304"/>
    <property type="project" value="Reactome"/>
</dbReference>
<dbReference type="GO" id="GO:0016020">
    <property type="term" value="C:membrane"/>
    <property type="evidence" value="ECO:0000318"/>
    <property type="project" value="GO_Central"/>
</dbReference>
<dbReference type="GO" id="GO:0043005">
    <property type="term" value="C:neuron projection"/>
    <property type="evidence" value="ECO:0007669"/>
    <property type="project" value="UniProtKB-SubCell"/>
</dbReference>
<dbReference type="GO" id="GO:0016604">
    <property type="term" value="C:nuclear body"/>
    <property type="evidence" value="ECO:0000314"/>
    <property type="project" value="HPA"/>
</dbReference>
<dbReference type="GO" id="GO:0048471">
    <property type="term" value="C:perinuclear region of cytoplasm"/>
    <property type="evidence" value="ECO:0007669"/>
    <property type="project" value="UniProtKB-SubCell"/>
</dbReference>
<dbReference type="GO" id="GO:0005085">
    <property type="term" value="F:guanyl-nucleotide exchange factor activity"/>
    <property type="evidence" value="ECO:0000314"/>
    <property type="project" value="UniProtKB"/>
</dbReference>
<dbReference type="GO" id="GO:0008138">
    <property type="term" value="F:protein tyrosine/serine/threonine phosphatase activity"/>
    <property type="evidence" value="ECO:0000304"/>
    <property type="project" value="UniProtKB"/>
</dbReference>
<dbReference type="GO" id="GO:0006470">
    <property type="term" value="P:protein dephosphorylation"/>
    <property type="evidence" value="ECO:0000304"/>
    <property type="project" value="UniProtKB"/>
</dbReference>
<dbReference type="GO" id="GO:0007286">
    <property type="term" value="P:spermatid development"/>
    <property type="evidence" value="ECO:0007669"/>
    <property type="project" value="Ensembl"/>
</dbReference>
<dbReference type="CDD" id="cd01235">
    <property type="entry name" value="PH_Sbf1_hMTMR5"/>
    <property type="match status" value="1"/>
</dbReference>
<dbReference type="CDD" id="cd14588">
    <property type="entry name" value="PTP-MTMR5"/>
    <property type="match status" value="1"/>
</dbReference>
<dbReference type="FunFam" id="2.30.29.30:FF:000093">
    <property type="entry name" value="SET binding factor 2"/>
    <property type="match status" value="1"/>
</dbReference>
<dbReference type="FunFam" id="3.30.450.200:FF:000004">
    <property type="entry name" value="SET binding factor 2"/>
    <property type="match status" value="1"/>
</dbReference>
<dbReference type="FunFam" id="3.40.50.11500:FF:000006">
    <property type="entry name" value="SET binding factor 2"/>
    <property type="match status" value="1"/>
</dbReference>
<dbReference type="Gene3D" id="3.30.450.200">
    <property type="match status" value="1"/>
</dbReference>
<dbReference type="Gene3D" id="3.40.50.11500">
    <property type="match status" value="1"/>
</dbReference>
<dbReference type="Gene3D" id="2.30.29.30">
    <property type="entry name" value="Pleckstrin-homology domain (PH domain)/Phosphotyrosine-binding domain (PTB)"/>
    <property type="match status" value="1"/>
</dbReference>
<dbReference type="InterPro" id="IPR001194">
    <property type="entry name" value="cDENN_dom"/>
</dbReference>
<dbReference type="InterPro" id="IPR005112">
    <property type="entry name" value="dDENN_dom"/>
</dbReference>
<dbReference type="InterPro" id="IPR043153">
    <property type="entry name" value="DENN_C"/>
</dbReference>
<dbReference type="InterPro" id="IPR004182">
    <property type="entry name" value="GRAM"/>
</dbReference>
<dbReference type="InterPro" id="IPR030564">
    <property type="entry name" value="Myotubularin"/>
</dbReference>
<dbReference type="InterPro" id="IPR010569">
    <property type="entry name" value="Myotubularin-like_Pase_dom"/>
</dbReference>
<dbReference type="InterPro" id="IPR011993">
    <property type="entry name" value="PH-like_dom_sf"/>
</dbReference>
<dbReference type="InterPro" id="IPR001849">
    <property type="entry name" value="PH_domain"/>
</dbReference>
<dbReference type="InterPro" id="IPR029021">
    <property type="entry name" value="Prot-tyrosine_phosphatase-like"/>
</dbReference>
<dbReference type="InterPro" id="IPR022096">
    <property type="entry name" value="SBF1/SBF2"/>
</dbReference>
<dbReference type="InterPro" id="IPR037516">
    <property type="entry name" value="Tripartite_DENN"/>
</dbReference>
<dbReference type="InterPro" id="IPR005113">
    <property type="entry name" value="uDENN_dom"/>
</dbReference>
<dbReference type="PANTHER" id="PTHR10807">
    <property type="entry name" value="MYOTUBULARIN-RELATED"/>
    <property type="match status" value="1"/>
</dbReference>
<dbReference type="PANTHER" id="PTHR10807:SF43">
    <property type="entry name" value="MYOTUBULARIN-RELATED PROTEIN 5"/>
    <property type="match status" value="1"/>
</dbReference>
<dbReference type="Pfam" id="PF02141">
    <property type="entry name" value="DENN"/>
    <property type="match status" value="1"/>
</dbReference>
<dbReference type="Pfam" id="PF02893">
    <property type="entry name" value="GRAM"/>
    <property type="match status" value="1"/>
</dbReference>
<dbReference type="Pfam" id="PF06602">
    <property type="entry name" value="Myotub-related"/>
    <property type="match status" value="1"/>
</dbReference>
<dbReference type="Pfam" id="PF00169">
    <property type="entry name" value="PH"/>
    <property type="match status" value="1"/>
</dbReference>
<dbReference type="Pfam" id="PF12335">
    <property type="entry name" value="SBF2"/>
    <property type="match status" value="1"/>
</dbReference>
<dbReference type="Pfam" id="PF03456">
    <property type="entry name" value="uDENN"/>
    <property type="match status" value="1"/>
</dbReference>
<dbReference type="SMART" id="SM00801">
    <property type="entry name" value="dDENN"/>
    <property type="match status" value="1"/>
</dbReference>
<dbReference type="SMART" id="SM00799">
    <property type="entry name" value="DENN"/>
    <property type="match status" value="1"/>
</dbReference>
<dbReference type="SMART" id="SM00568">
    <property type="entry name" value="GRAM"/>
    <property type="match status" value="1"/>
</dbReference>
<dbReference type="SMART" id="SM00233">
    <property type="entry name" value="PH"/>
    <property type="match status" value="1"/>
</dbReference>
<dbReference type="SMART" id="SM00800">
    <property type="entry name" value="uDENN"/>
    <property type="match status" value="1"/>
</dbReference>
<dbReference type="SUPFAM" id="SSF52799">
    <property type="entry name" value="(Phosphotyrosine protein) phosphatases II"/>
    <property type="match status" value="1"/>
</dbReference>
<dbReference type="SUPFAM" id="SSF50729">
    <property type="entry name" value="PH domain-like"/>
    <property type="match status" value="2"/>
</dbReference>
<dbReference type="PROSITE" id="PS50211">
    <property type="entry name" value="DENN"/>
    <property type="match status" value="1"/>
</dbReference>
<dbReference type="PROSITE" id="PS50003">
    <property type="entry name" value="PH_DOMAIN"/>
    <property type="match status" value="1"/>
</dbReference>
<dbReference type="PROSITE" id="PS51339">
    <property type="entry name" value="PPASE_MYOTUBULARIN"/>
    <property type="match status" value="1"/>
</dbReference>
<name>MTMR5_HUMAN</name>
<sequence>MARLADYFVLVAFGPHPRGSGEGQGQILQRFPEKDWEDNPFPQGIELFCQPSGWQLCPERNPPTFFVAVLTDINSERHYCACLTFWEPAEPSQQETTRVEDATEREEEGDEGGQTHLSPTAPAPSAQLFAPKTLVLVSRLDHTEVFRNSLGLIYAIHVEGLNVCLENVIGNLLTCTVPLAGGSQRTISLGAGDRQVIQTPLADSLPVSRCSVALLFRQLGITNVLSLFCAALTEHKVLFLSRSYQRLADACRGLLALLFPLRYSFTYVPILPAQLLEVLSTPTPFIIGVNAAFQAETQELLDVIVADLDGGTVTIPECVHIPPLPEPLQSQTHSVLSMVLDPELELADLAFPPPTTSTSSLKMQDKELRAVFLRLFAQLLQGYRWCLHVVRIHPEPVIRFHKAAFLGQRGLVEDDFLMKVLEGMAFAGFVSERGVPYRPTDLFDELVAHEVARMRADENHPQRVLRHVQELAEQLYKNENPYPAVAMHKVQRPGESSHLRRVPRPFPRLDEGTVQWIVDQAAAKMQGAPPAVKAERRTTVPSGPPMTAILERCSGLHVNSARRLEVVRNCISYVFEGKMLEAKKLLPAVLRALKGRAARRCLAQELHLHVQQNRAVLDHQQFDFVVRMMNCCLQDCTSLDEHGIAAALLPLVTAFCRKLSPGVTQFAYSCVQEHVVWSTPQFWEAMFYGDVQTHIRALYLEPTEDLAPAQEVGEAPSQEDERSALDVASEQRRLWPTLSREKQQELVQKEESTVFSQAIHYANRMSYLLLPLDSSKSRLLRERAGLGDLESASNSLVTNSMAGSVAESYDTESGFEDAETCDVAGAVVRFINRFVDKVCTESGVTSDHLKGLHVMVPDIVQMHIETLEAVQRESRRLPPIQKPKLLRPRLLPGEECVLDGLRVYLLPDGREEGAGGSAGGPALLPAEGAVFLTTYRVIFTGMPTDPLVGEQVVVRSFPVAALTKEKRISVQTPVDQLLQDGLQLRSCTFQLLKMAFDEEVGSDSAELFRKQLHKLRYPPDIRATFAFTLGSAHTPGRPPRVTKDKGPSLRTLSRNLVKNAKKTIGRQHVTRKKYNPPSWEHRGQPPPEDQEDEISVSEELEPSTLTPSSALKPSDRMTMSSLVERACCRDYQRLGLGTLSSSLSRAKSEPFRISPVNRMYAICRSYPGLLIVPQSVQDNALQRVSRCYRQNRFPVVCWRSGRSKAVLLRSGGLHGKGVVGLFKAQNAPSPGQSQADSSSLEQEKYLQAVVSSMPRYADASGRNTLSGFSSAHMGSHGKWGSVRTSGRSSGLGTDVGSRLAGRDALAPPQANGGPPDPGFLRPQRAALYILGDKAQLKGVRSDPLQQWELVPIEVFEARQVKASFKKLLKACVPGCPAAEPSPASFLRSLEDSEWLIQIHKLLQVSVLVVELLDSGSSVLVGLEDGWDITTQVVSLVQLLSDPFYRTLEGFRLLVEKEWLSFGHRFSHRGAHTLAGQSSGFTPVFLQFLDCVHQVHLQFPMEFEFSQFYLKFLGYHHVSRRFRTFLLDSDYERIELGLLYEEKGERRGQVPCRSVWEYVDRLSKRTPVFHNYMYAPEDAEVLRPYSNVSNLKVWDFYTEETLAEGPPYDWELAQGPPEPPEEERSDGGAPQSRRRVVWPCYDSCPRAQPDAISRLLEELQRLETELGQPAERWKDTWDRVKAAQRLEGRPDGRGTPSSLLVSTAPHHRRSLGVYLQEGPVGSTLSLSLDSDQSSGSTTSGSRQAARRSTSTLYSQFQTAESENRSYEGTLYKKGAFMKPWKARWFVLDKTKHQLRYYDHRVDTECKGVIDLAEVEAVAPGTPTMGAPKTVDEKAFFDVKTTRRVYNFCAQDVPSAQQWVDRIQSCLSDA</sequence>
<reference key="1">
    <citation type="journal article" date="1999" name="Nature">
        <title>The DNA sequence of human chromosome 22.</title>
        <authorList>
            <person name="Dunham I."/>
            <person name="Hunt A.R."/>
            <person name="Collins J.E."/>
            <person name="Bruskiewich R."/>
            <person name="Beare D.M."/>
            <person name="Clamp M."/>
            <person name="Smink L.J."/>
            <person name="Ainscough R."/>
            <person name="Almeida J.P."/>
            <person name="Babbage A.K."/>
            <person name="Bagguley C."/>
            <person name="Bailey J."/>
            <person name="Barlow K.F."/>
            <person name="Bates K.N."/>
            <person name="Beasley O.P."/>
            <person name="Bird C.P."/>
            <person name="Blakey S.E."/>
            <person name="Bridgeman A.M."/>
            <person name="Buck D."/>
            <person name="Burgess J."/>
            <person name="Burrill W.D."/>
            <person name="Burton J."/>
            <person name="Carder C."/>
            <person name="Carter N.P."/>
            <person name="Chen Y."/>
            <person name="Clark G."/>
            <person name="Clegg S.M."/>
            <person name="Cobley V.E."/>
            <person name="Cole C.G."/>
            <person name="Collier R.E."/>
            <person name="Connor R."/>
            <person name="Conroy D."/>
            <person name="Corby N.R."/>
            <person name="Coville G.J."/>
            <person name="Cox A.V."/>
            <person name="Davis J."/>
            <person name="Dawson E."/>
            <person name="Dhami P.D."/>
            <person name="Dockree C."/>
            <person name="Dodsworth S.J."/>
            <person name="Durbin R.M."/>
            <person name="Ellington A.G."/>
            <person name="Evans K.L."/>
            <person name="Fey J.M."/>
            <person name="Fleming K."/>
            <person name="French L."/>
            <person name="Garner A.A."/>
            <person name="Gilbert J.G.R."/>
            <person name="Goward M.E."/>
            <person name="Grafham D.V."/>
            <person name="Griffiths M.N.D."/>
            <person name="Hall C."/>
            <person name="Hall R.E."/>
            <person name="Hall-Tamlyn G."/>
            <person name="Heathcott R.W."/>
            <person name="Ho S."/>
            <person name="Holmes S."/>
            <person name="Hunt S.E."/>
            <person name="Jones M.C."/>
            <person name="Kershaw J."/>
            <person name="Kimberley A.M."/>
            <person name="King A."/>
            <person name="Laird G.K."/>
            <person name="Langford C.F."/>
            <person name="Leversha M.A."/>
            <person name="Lloyd C."/>
            <person name="Lloyd D.M."/>
            <person name="Martyn I.D."/>
            <person name="Mashreghi-Mohammadi M."/>
            <person name="Matthews L.H."/>
            <person name="Mccann O.T."/>
            <person name="Mcclay J."/>
            <person name="Mclaren S."/>
            <person name="McMurray A.A."/>
            <person name="Milne S.A."/>
            <person name="Mortimore B.J."/>
            <person name="Odell C.N."/>
            <person name="Pavitt R."/>
            <person name="Pearce A.V."/>
            <person name="Pearson D."/>
            <person name="Phillimore B.J.C.T."/>
            <person name="Phillips S.H."/>
            <person name="Plumb R.W."/>
            <person name="Ramsay H."/>
            <person name="Ramsey Y."/>
            <person name="Rogers L."/>
            <person name="Ross M.T."/>
            <person name="Scott C.E."/>
            <person name="Sehra H.K."/>
            <person name="Skuce C.D."/>
            <person name="Smalley S."/>
            <person name="Smith M.L."/>
            <person name="Soderlund C."/>
            <person name="Spragon L."/>
            <person name="Steward C.A."/>
            <person name="Sulston J.E."/>
            <person name="Swann R.M."/>
            <person name="Vaudin M."/>
            <person name="Wall M."/>
            <person name="Wallis J.M."/>
            <person name="Whiteley M.N."/>
            <person name="Willey D.L."/>
            <person name="Williams L."/>
            <person name="Williams S.A."/>
            <person name="Williamson H."/>
            <person name="Wilmer T.E."/>
            <person name="Wilming L."/>
            <person name="Wright C.L."/>
            <person name="Hubbard T."/>
            <person name="Bentley D.R."/>
            <person name="Beck S."/>
            <person name="Rogers J."/>
            <person name="Shimizu N."/>
            <person name="Minoshima S."/>
            <person name="Kawasaki K."/>
            <person name="Sasaki T."/>
            <person name="Asakawa S."/>
            <person name="Kudoh J."/>
            <person name="Shintani A."/>
            <person name="Shibuya K."/>
            <person name="Yoshizaki Y."/>
            <person name="Aoki N."/>
            <person name="Mitsuyama S."/>
            <person name="Roe B.A."/>
            <person name="Chen F."/>
            <person name="Chu L."/>
            <person name="Crabtree J."/>
            <person name="Deschamps S."/>
            <person name="Do A."/>
            <person name="Do T."/>
            <person name="Dorman A."/>
            <person name="Fang F."/>
            <person name="Fu Y."/>
            <person name="Hu P."/>
            <person name="Hua A."/>
            <person name="Kenton S."/>
            <person name="Lai H."/>
            <person name="Lao H.I."/>
            <person name="Lewis J."/>
            <person name="Lewis S."/>
            <person name="Lin S.-P."/>
            <person name="Loh P."/>
            <person name="Malaj E."/>
            <person name="Nguyen T."/>
            <person name="Pan H."/>
            <person name="Phan S."/>
            <person name="Qi S."/>
            <person name="Qian Y."/>
            <person name="Ray L."/>
            <person name="Ren Q."/>
            <person name="Shaull S."/>
            <person name="Sloan D."/>
            <person name="Song L."/>
            <person name="Wang Q."/>
            <person name="Wang Y."/>
            <person name="Wang Z."/>
            <person name="White J."/>
            <person name="Willingham D."/>
            <person name="Wu H."/>
            <person name="Yao Z."/>
            <person name="Zhan M."/>
            <person name="Zhang G."/>
            <person name="Chissoe S."/>
            <person name="Murray J."/>
            <person name="Miller N."/>
            <person name="Minx P."/>
            <person name="Fulton R."/>
            <person name="Johnson D."/>
            <person name="Bemis G."/>
            <person name="Bentley D."/>
            <person name="Bradshaw H."/>
            <person name="Bourne S."/>
            <person name="Cordes M."/>
            <person name="Du Z."/>
            <person name="Fulton L."/>
            <person name="Goela D."/>
            <person name="Graves T."/>
            <person name="Hawkins J."/>
            <person name="Hinds K."/>
            <person name="Kemp K."/>
            <person name="Latreille P."/>
            <person name="Layman D."/>
            <person name="Ozersky P."/>
            <person name="Rohlfing T."/>
            <person name="Scheet P."/>
            <person name="Walker C."/>
            <person name="Wamsley A."/>
            <person name="Wohldmann P."/>
            <person name="Pepin K."/>
            <person name="Nelson J."/>
            <person name="Korf I."/>
            <person name="Bedell J.A."/>
            <person name="Hillier L.W."/>
            <person name="Mardis E."/>
            <person name="Waterston R."/>
            <person name="Wilson R."/>
            <person name="Emanuel B.S."/>
            <person name="Shaikh T."/>
            <person name="Kurahashi H."/>
            <person name="Saitta S."/>
            <person name="Budarf M.L."/>
            <person name="McDermid H.E."/>
            <person name="Johnson A."/>
            <person name="Wong A.C.C."/>
            <person name="Morrow B.E."/>
            <person name="Edelmann L."/>
            <person name="Kim U.J."/>
            <person name="Shizuya H."/>
            <person name="Simon M.I."/>
            <person name="Dumanski J.P."/>
            <person name="Peyrard M."/>
            <person name="Kedra D."/>
            <person name="Seroussi E."/>
            <person name="Fransson I."/>
            <person name="Tapia I."/>
            <person name="Bruder C.E."/>
            <person name="O'Brien K.P."/>
            <person name="Wilkinson P."/>
            <person name="Bodenteich A."/>
            <person name="Hartman K."/>
            <person name="Hu X."/>
            <person name="Khan A.S."/>
            <person name="Lane L."/>
            <person name="Tilahun Y."/>
            <person name="Wright H."/>
        </authorList>
    </citation>
    <scope>NUCLEOTIDE SEQUENCE [LARGE SCALE GENOMIC DNA]</scope>
</reference>
<reference key="2">
    <citation type="submission" date="2005-07" db="EMBL/GenBank/DDBJ databases">
        <authorList>
            <person name="Mural R.J."/>
            <person name="Istrail S."/>
            <person name="Sutton G.G."/>
            <person name="Florea L."/>
            <person name="Halpern A.L."/>
            <person name="Mobarry C.M."/>
            <person name="Lippert R."/>
            <person name="Walenz B."/>
            <person name="Shatkay H."/>
            <person name="Dew I."/>
            <person name="Miller J.R."/>
            <person name="Flanigan M.J."/>
            <person name="Edwards N.J."/>
            <person name="Bolanos R."/>
            <person name="Fasulo D."/>
            <person name="Halldorsson B.V."/>
            <person name="Hannenhalli S."/>
            <person name="Turner R."/>
            <person name="Yooseph S."/>
            <person name="Lu F."/>
            <person name="Nusskern D.R."/>
            <person name="Shue B.C."/>
            <person name="Zheng X.H."/>
            <person name="Zhong F."/>
            <person name="Delcher A.L."/>
            <person name="Huson D.H."/>
            <person name="Kravitz S.A."/>
            <person name="Mouchard L."/>
            <person name="Reinert K."/>
            <person name="Remington K.A."/>
            <person name="Clark A.G."/>
            <person name="Waterman M.S."/>
            <person name="Eichler E.E."/>
            <person name="Adams M.D."/>
            <person name="Hunkapiller M.W."/>
            <person name="Myers E.W."/>
            <person name="Venter J.C."/>
        </authorList>
    </citation>
    <scope>NUCLEOTIDE SEQUENCE [LARGE SCALE GENOMIC DNA]</scope>
</reference>
<reference key="3">
    <citation type="journal article" date="2004" name="Genome Res.">
        <title>The status, quality, and expansion of the NIH full-length cDNA project: the Mammalian Gene Collection (MGC).</title>
        <authorList>
            <consortium name="The MGC Project Team"/>
        </authorList>
    </citation>
    <scope>NUCLEOTIDE SEQUENCE [LARGE SCALE MRNA] (ISOFORM 5)</scope>
    <scope>NUCLEOTIDE SEQUENCE [LARGE SCALE MRNA] OF 939-1867 (ISOFORM 1)</scope>
    <source>
        <tissue>Muscle</tissue>
        <tissue>Ovary</tissue>
    </source>
</reference>
<reference key="4">
    <citation type="journal article" date="1998" name="Nat. Genet.">
        <title>Association of SET domain and myotubularin-related proteins modulates growth control.</title>
        <authorList>
            <person name="Cui X."/>
            <person name="De Vivo I."/>
            <person name="Slany R."/>
            <person name="Miyamoto A."/>
            <person name="Firestein R."/>
            <person name="Cleary M.L."/>
        </authorList>
    </citation>
    <scope>NUCLEOTIDE SEQUENCE [MRNA] OF 239-1868 (ISOFORM 1)</scope>
    <scope>FUNCTION</scope>
    <scope>LACK OF CATALYTIC ACTIVITY</scope>
    <scope>INTERACTION WITH KMT2A/MLL1</scope>
    <source>
        <tissue>Lymphoblast</tissue>
    </source>
</reference>
<reference key="5">
    <citation type="journal article" date="1998" name="Hum. Mol. Genet.">
        <title>Characterization of the myotubularin dual specificity phosphatase gene family from yeast to human.</title>
        <authorList>
            <person name="Laporte J."/>
            <person name="Blondeau F."/>
            <person name="Buj-Bello A."/>
            <person name="Tentler D."/>
            <person name="Kretz C."/>
            <person name="Dahl N."/>
            <person name="Mandel J.-L."/>
        </authorList>
    </citation>
    <scope>NUCLEOTIDE SEQUENCE [MRNA] OF 1363-1603</scope>
</reference>
<reference key="6">
    <citation type="journal article" date="2000" name="Mol. Cell. Biol.">
        <title>Set domain-dependent regulation of transcriptional silencing and growth control by SUV39H1, a mammalian ortholog of Drosophila Su(var)3-9.</title>
        <authorList>
            <person name="Firestein R."/>
            <person name="Cui X."/>
            <person name="Huie P."/>
            <person name="Cleary M.L."/>
        </authorList>
    </citation>
    <scope>INTERACTION WITH SUV39H1</scope>
</reference>
<reference key="7">
    <citation type="journal article" date="2003" name="Proc. Natl. Acad. Sci. U.S.A.">
        <title>Regulation of myotubularin-related (MTMR)2 phosphatidylinositol phosphatase by MTMR5, a catalytically inactive phosphatase.</title>
        <authorList>
            <person name="Kim S.-A."/>
            <person name="Vacratsis P.O."/>
            <person name="Firestein R."/>
            <person name="Cleary M.L."/>
            <person name="Dixon J.E."/>
        </authorList>
    </citation>
    <scope>FUNCTION</scope>
    <scope>INTERACTION WITH MTMR2</scope>
    <scope>IDENTIFICATION BY MASS SPECTROMETRY</scope>
    <scope>DOMAIN</scope>
</reference>
<reference key="8">
    <citation type="journal article" date="2008" name="Proc. Natl. Acad. Sci. U.S.A.">
        <title>A quantitative atlas of mitotic phosphorylation.</title>
        <authorList>
            <person name="Dephoure N."/>
            <person name="Zhou C."/>
            <person name="Villen J."/>
            <person name="Beausoleil S.A."/>
            <person name="Bakalarski C.E."/>
            <person name="Elledge S.J."/>
            <person name="Gygi S.P."/>
        </authorList>
    </citation>
    <scope>PHOSPHORYLATION [LARGE SCALE ANALYSIS] AT THR-1138</scope>
    <scope>IDENTIFICATION BY MASS SPECTROMETRY [LARGE SCALE ANALYSIS]</scope>
    <source>
        <tissue>Cervix carcinoma</tissue>
    </source>
</reference>
<reference key="9">
    <citation type="journal article" date="2009" name="Sci. Signal.">
        <title>Quantitative phosphoproteomic analysis of T cell receptor signaling reveals system-wide modulation of protein-protein interactions.</title>
        <authorList>
            <person name="Mayya V."/>
            <person name="Lundgren D.H."/>
            <person name="Hwang S.-I."/>
            <person name="Rezaul K."/>
            <person name="Wu L."/>
            <person name="Eng J.K."/>
            <person name="Rodionov V."/>
            <person name="Han D.K."/>
        </authorList>
    </citation>
    <scope>IDENTIFICATION BY MASS SPECTROMETRY [LARGE SCALE ANALYSIS]</scope>
    <source>
        <tissue>Leukemic T-cell</tissue>
    </source>
</reference>
<reference key="10">
    <citation type="journal article" date="2010" name="J. Cell Biol.">
        <title>Family-wide characterization of the DENN domain Rab GDP-GTP exchange factors.</title>
        <authorList>
            <person name="Yoshimura S."/>
            <person name="Gerondopoulos A."/>
            <person name="Linford A."/>
            <person name="Rigden D.J."/>
            <person name="Barr F.A."/>
        </authorList>
    </citation>
    <scope>FUNCTION AS GUANYL-NUCLEOTIDE EXCHANGE FACTOR</scope>
</reference>
<reference key="11">
    <citation type="journal article" date="2010" name="Sci. Signal.">
        <title>Quantitative phosphoproteomics reveals widespread full phosphorylation site occupancy during mitosis.</title>
        <authorList>
            <person name="Olsen J.V."/>
            <person name="Vermeulen M."/>
            <person name="Santamaria A."/>
            <person name="Kumar C."/>
            <person name="Miller M.L."/>
            <person name="Jensen L.J."/>
            <person name="Gnad F."/>
            <person name="Cox J."/>
            <person name="Jensen T.S."/>
            <person name="Nigg E.A."/>
            <person name="Brunak S."/>
            <person name="Mann M."/>
        </authorList>
    </citation>
    <scope>IDENTIFICATION BY MASS SPECTROMETRY [LARGE SCALE ANALYSIS]</scope>
    <source>
        <tissue>Cervix carcinoma</tissue>
    </source>
</reference>
<reference key="12">
    <citation type="journal article" date="2011" name="BMC Syst. Biol.">
        <title>Initial characterization of the human central proteome.</title>
        <authorList>
            <person name="Burkard T.R."/>
            <person name="Planyavsky M."/>
            <person name="Kaupe I."/>
            <person name="Breitwieser F.P."/>
            <person name="Buerckstuemmer T."/>
            <person name="Bennett K.L."/>
            <person name="Superti-Furga G."/>
            <person name="Colinge J."/>
        </authorList>
    </citation>
    <scope>IDENTIFICATION BY MASS SPECTROMETRY [LARGE SCALE ANALYSIS]</scope>
</reference>
<reference key="13">
    <citation type="journal article" date="2013" name="J. Proteome Res.">
        <title>Toward a comprehensive characterization of a human cancer cell phosphoproteome.</title>
        <authorList>
            <person name="Zhou H."/>
            <person name="Di Palma S."/>
            <person name="Preisinger C."/>
            <person name="Peng M."/>
            <person name="Polat A.N."/>
            <person name="Heck A.J."/>
            <person name="Mohammed S."/>
        </authorList>
    </citation>
    <scope>PHOSPHORYLATION [LARGE SCALE ANALYSIS] AT SER-1121; THR-1138 AND SER-1747</scope>
    <scope>IDENTIFICATION BY MASS SPECTROMETRY [LARGE SCALE ANALYSIS]</scope>
    <source>
        <tissue>Cervix carcinoma</tissue>
        <tissue>Erythroleukemia</tissue>
    </source>
</reference>
<reference key="14">
    <citation type="journal article" date="2014" name="J. Proteomics">
        <title>An enzyme assisted RP-RPLC approach for in-depth analysis of human liver phosphoproteome.</title>
        <authorList>
            <person name="Bian Y."/>
            <person name="Song C."/>
            <person name="Cheng K."/>
            <person name="Dong M."/>
            <person name="Wang F."/>
            <person name="Huang J."/>
            <person name="Sun D."/>
            <person name="Wang L."/>
            <person name="Ye M."/>
            <person name="Zou H."/>
        </authorList>
    </citation>
    <scope>PHOSPHORYLATION [LARGE SCALE ANALYSIS] AT THR-1138</scope>
    <scope>IDENTIFICATION BY MASS SPECTROMETRY [LARGE SCALE ANALYSIS]</scope>
    <source>
        <tissue>Liver</tissue>
    </source>
</reference>
<reference key="15">
    <citation type="journal article" date="2014" name="Mol. Cell. Proteomics">
        <title>Immunoaffinity enrichment and mass spectrometry analysis of protein methylation.</title>
        <authorList>
            <person name="Guo A."/>
            <person name="Gu H."/>
            <person name="Zhou J."/>
            <person name="Mulhern D."/>
            <person name="Wang Y."/>
            <person name="Lee K.A."/>
            <person name="Yang V."/>
            <person name="Aguiar M."/>
            <person name="Kornhauser J."/>
            <person name="Jia X."/>
            <person name="Ren J."/>
            <person name="Beausoleil S.A."/>
            <person name="Silva J.C."/>
            <person name="Vemulapalli V."/>
            <person name="Bedford M.T."/>
            <person name="Comb M.J."/>
        </authorList>
    </citation>
    <scope>METHYLATION [LARGE SCALE ANALYSIS] AT LYS-1223</scope>
    <scope>IDENTIFICATION BY MASS SPECTROMETRY [LARGE SCALE ANALYSIS]</scope>
    <source>
        <tissue>Colon carcinoma</tissue>
    </source>
</reference>
<reference key="16">
    <citation type="journal article" date="2022" name="Curr. Biol.">
        <title>Myotubularin-related phosphatase 5 is a critical determinant of autophagy in neurons.</title>
        <authorList>
            <person name="Chua J.P."/>
            <person name="Bedi K."/>
            <person name="Paulsen M.T."/>
            <person name="Ljungman M."/>
            <person name="Tank E.M.H."/>
            <person name="Kim E.S."/>
            <person name="McBride J.P."/>
            <person name="Colon-Mercado J.M."/>
            <person name="Ward M.E."/>
            <person name="Weisman L.S."/>
            <person name="Barmada S.J."/>
        </authorList>
    </citation>
    <scope>FUNCTION</scope>
    <scope>SUBCELLULAR LOCATION</scope>
    <scope>TISSUE SPECIFICITY</scope>
</reference>
<reference key="17">
    <citation type="journal article" date="2022" name="Hum. Mol. Genet.">
        <title>Distinct roles for the Charcot-Marie-Tooth disease-causing endosomal regulators Mtmr5 and Mtmr13 in axon radial sorting and Schwann cell myelination.</title>
        <authorList>
            <person name="Mammel A.E."/>
            <person name="Delgado K.C."/>
            <person name="Chin A.L."/>
            <person name="Condon A.F."/>
            <person name="Hill J.Q."/>
            <person name="Aicher S.A."/>
            <person name="Wang Y."/>
            <person name="Fedorov L.M."/>
            <person name="Robinson F.L."/>
        </authorList>
    </citation>
    <scope>INTERACTION WITH MTMR2 AND MTMR13</scope>
</reference>
<reference key="18">
    <citation type="journal article" date="2013" name="Neurology">
        <title>SET binding factor 1 (SBF1) mutation causes Charcot-Marie-Tooth disease type 4B3.</title>
        <authorList>
            <person name="Nakhro K."/>
            <person name="Park J.M."/>
            <person name="Hong Y.B."/>
            <person name="Park J.H."/>
            <person name="Nam S.H."/>
            <person name="Yoon B.R."/>
            <person name="Yoo J.H."/>
            <person name="Koo H."/>
            <person name="Jung S.C."/>
            <person name="Kim H.L."/>
            <person name="Kim J.Y."/>
            <person name="Choi K.G."/>
            <person name="Choi B.O."/>
            <person name="Chung K.W."/>
        </authorList>
    </citation>
    <scope>VARIANTS CMT4B3 VAL-418 AND ALA-1565</scope>
</reference>